<gene>
    <name evidence="1" type="primary">argG</name>
    <name type="ordered locus">BCE33L4375</name>
</gene>
<evidence type="ECO:0000255" key="1">
    <source>
        <dbReference type="HAMAP-Rule" id="MF_00005"/>
    </source>
</evidence>
<organism>
    <name type="scientific">Bacillus cereus (strain ZK / E33L)</name>
    <dbReference type="NCBI Taxonomy" id="288681"/>
    <lineage>
        <taxon>Bacteria</taxon>
        <taxon>Bacillati</taxon>
        <taxon>Bacillota</taxon>
        <taxon>Bacilli</taxon>
        <taxon>Bacillales</taxon>
        <taxon>Bacillaceae</taxon>
        <taxon>Bacillus</taxon>
        <taxon>Bacillus cereus group</taxon>
    </lineage>
</organism>
<sequence>MEKKKVVLAYSGGLDTSVAIKWLQEKNYDIIALCLDLGEGKDLAFVKEKALSVGAIKSYMIDVQEEFANEYALMAMQAHTLYEGKYPLVSALSRPLIAKKLVEIAEQEGATAVAHGCTGKGNDQVRFEVSIQALNPYLEVIAPVREWKWSREEEIAYAKENNVPIPINLDSPFSIDQNLWGRSNECGILEDPWAAPPEDAYEMTLALEDTPNKPEFVEIGFEAGVPTTLNGTAYPLSELIKTLNALAGKHGVGRIDHVENRLVGIKSREVYECPAAMTLITAHKELEDLTLVKEVAHFKPMIEQKITELIYNGLWFSPLKQALNAFLQETQKNVTGTVRVKLFKGHAIVEGRKSEYSLYDEKLATYTAQDEFNHDAAVGFISLFGLPTKVYSQVNQKKVEA</sequence>
<dbReference type="EC" id="6.3.4.5" evidence="1"/>
<dbReference type="EMBL" id="CP000001">
    <property type="protein sequence ID" value="AAU15895.1"/>
    <property type="molecule type" value="Genomic_DNA"/>
</dbReference>
<dbReference type="RefSeq" id="WP_000412329.1">
    <property type="nucleotide sequence ID" value="NZ_CP009968.1"/>
</dbReference>
<dbReference type="SMR" id="Q633G4"/>
<dbReference type="KEGG" id="bcz:BCE33L4375"/>
<dbReference type="PATRIC" id="fig|288681.22.peg.997"/>
<dbReference type="UniPathway" id="UPA00068">
    <property type="reaction ID" value="UER00113"/>
</dbReference>
<dbReference type="Proteomes" id="UP000002612">
    <property type="component" value="Chromosome"/>
</dbReference>
<dbReference type="GO" id="GO:0005737">
    <property type="term" value="C:cytoplasm"/>
    <property type="evidence" value="ECO:0007669"/>
    <property type="project" value="UniProtKB-SubCell"/>
</dbReference>
<dbReference type="GO" id="GO:0004055">
    <property type="term" value="F:argininosuccinate synthase activity"/>
    <property type="evidence" value="ECO:0007669"/>
    <property type="project" value="UniProtKB-UniRule"/>
</dbReference>
<dbReference type="GO" id="GO:0005524">
    <property type="term" value="F:ATP binding"/>
    <property type="evidence" value="ECO:0007669"/>
    <property type="project" value="UniProtKB-UniRule"/>
</dbReference>
<dbReference type="GO" id="GO:0000053">
    <property type="term" value="P:argininosuccinate metabolic process"/>
    <property type="evidence" value="ECO:0007669"/>
    <property type="project" value="TreeGrafter"/>
</dbReference>
<dbReference type="GO" id="GO:0006526">
    <property type="term" value="P:L-arginine biosynthetic process"/>
    <property type="evidence" value="ECO:0007669"/>
    <property type="project" value="UniProtKB-UniRule"/>
</dbReference>
<dbReference type="GO" id="GO:0000050">
    <property type="term" value="P:urea cycle"/>
    <property type="evidence" value="ECO:0007669"/>
    <property type="project" value="TreeGrafter"/>
</dbReference>
<dbReference type="CDD" id="cd01999">
    <property type="entry name" value="ASS"/>
    <property type="match status" value="1"/>
</dbReference>
<dbReference type="FunFam" id="1.20.5.470:FF:000002">
    <property type="entry name" value="Argininosuccinate synthase"/>
    <property type="match status" value="1"/>
</dbReference>
<dbReference type="FunFam" id="3.40.50.620:FF:000038">
    <property type="entry name" value="Argininosuccinate synthase"/>
    <property type="match status" value="1"/>
</dbReference>
<dbReference type="FunFam" id="3.90.1260.10:FF:000007">
    <property type="entry name" value="Argininosuccinate synthase"/>
    <property type="match status" value="1"/>
</dbReference>
<dbReference type="Gene3D" id="3.90.1260.10">
    <property type="entry name" value="Argininosuccinate synthetase, chain A, domain 2"/>
    <property type="match status" value="1"/>
</dbReference>
<dbReference type="Gene3D" id="3.40.50.620">
    <property type="entry name" value="HUPs"/>
    <property type="match status" value="1"/>
</dbReference>
<dbReference type="Gene3D" id="1.20.5.470">
    <property type="entry name" value="Single helix bin"/>
    <property type="match status" value="1"/>
</dbReference>
<dbReference type="HAMAP" id="MF_00005">
    <property type="entry name" value="Arg_succ_synth_type1"/>
    <property type="match status" value="1"/>
</dbReference>
<dbReference type="InterPro" id="IPR048268">
    <property type="entry name" value="Arginosuc_syn_C"/>
</dbReference>
<dbReference type="InterPro" id="IPR048267">
    <property type="entry name" value="Arginosuc_syn_N"/>
</dbReference>
<dbReference type="InterPro" id="IPR001518">
    <property type="entry name" value="Arginosuc_synth"/>
</dbReference>
<dbReference type="InterPro" id="IPR018223">
    <property type="entry name" value="Arginosuc_synth_CS"/>
</dbReference>
<dbReference type="InterPro" id="IPR023434">
    <property type="entry name" value="Arginosuc_synth_type_1_subfam"/>
</dbReference>
<dbReference type="InterPro" id="IPR024074">
    <property type="entry name" value="AS_cat/multimer_dom_body"/>
</dbReference>
<dbReference type="InterPro" id="IPR014729">
    <property type="entry name" value="Rossmann-like_a/b/a_fold"/>
</dbReference>
<dbReference type="NCBIfam" id="TIGR00032">
    <property type="entry name" value="argG"/>
    <property type="match status" value="1"/>
</dbReference>
<dbReference type="NCBIfam" id="NF001770">
    <property type="entry name" value="PRK00509.1"/>
    <property type="match status" value="1"/>
</dbReference>
<dbReference type="PANTHER" id="PTHR11587">
    <property type="entry name" value="ARGININOSUCCINATE SYNTHASE"/>
    <property type="match status" value="1"/>
</dbReference>
<dbReference type="PANTHER" id="PTHR11587:SF2">
    <property type="entry name" value="ARGININOSUCCINATE SYNTHASE"/>
    <property type="match status" value="1"/>
</dbReference>
<dbReference type="Pfam" id="PF20979">
    <property type="entry name" value="Arginosuc_syn_C"/>
    <property type="match status" value="1"/>
</dbReference>
<dbReference type="Pfam" id="PF00764">
    <property type="entry name" value="Arginosuc_synth"/>
    <property type="match status" value="1"/>
</dbReference>
<dbReference type="SUPFAM" id="SSF52402">
    <property type="entry name" value="Adenine nucleotide alpha hydrolases-like"/>
    <property type="match status" value="1"/>
</dbReference>
<dbReference type="SUPFAM" id="SSF69864">
    <property type="entry name" value="Argininosuccinate synthetase, C-terminal domain"/>
    <property type="match status" value="1"/>
</dbReference>
<dbReference type="PROSITE" id="PS00564">
    <property type="entry name" value="ARGININOSUCCIN_SYN_1"/>
    <property type="match status" value="1"/>
</dbReference>
<dbReference type="PROSITE" id="PS00565">
    <property type="entry name" value="ARGININOSUCCIN_SYN_2"/>
    <property type="match status" value="1"/>
</dbReference>
<proteinExistence type="inferred from homology"/>
<name>ASSY_BACCZ</name>
<comment type="catalytic activity">
    <reaction evidence="1">
        <text>L-citrulline + L-aspartate + ATP = 2-(N(omega)-L-arginino)succinate + AMP + diphosphate + H(+)</text>
        <dbReference type="Rhea" id="RHEA:10932"/>
        <dbReference type="ChEBI" id="CHEBI:15378"/>
        <dbReference type="ChEBI" id="CHEBI:29991"/>
        <dbReference type="ChEBI" id="CHEBI:30616"/>
        <dbReference type="ChEBI" id="CHEBI:33019"/>
        <dbReference type="ChEBI" id="CHEBI:57472"/>
        <dbReference type="ChEBI" id="CHEBI:57743"/>
        <dbReference type="ChEBI" id="CHEBI:456215"/>
        <dbReference type="EC" id="6.3.4.5"/>
    </reaction>
</comment>
<comment type="pathway">
    <text evidence="1">Amino-acid biosynthesis; L-arginine biosynthesis; L-arginine from L-ornithine and carbamoyl phosphate: step 2/3.</text>
</comment>
<comment type="subunit">
    <text evidence="1">Homotetramer.</text>
</comment>
<comment type="subcellular location">
    <subcellularLocation>
        <location evidence="1">Cytoplasm</location>
    </subcellularLocation>
</comment>
<comment type="similarity">
    <text evidence="1">Belongs to the argininosuccinate synthase family. Type 1 subfamily.</text>
</comment>
<protein>
    <recommendedName>
        <fullName evidence="1">Argininosuccinate synthase</fullName>
        <ecNumber evidence="1">6.3.4.5</ecNumber>
    </recommendedName>
    <alternativeName>
        <fullName evidence="1">Citrulline--aspartate ligase</fullName>
    </alternativeName>
</protein>
<feature type="chain" id="PRO_0000148567" description="Argininosuccinate synthase">
    <location>
        <begin position="1"/>
        <end position="401"/>
    </location>
</feature>
<feature type="binding site" evidence="1">
    <location>
        <begin position="9"/>
        <end position="17"/>
    </location>
    <ligand>
        <name>ATP</name>
        <dbReference type="ChEBI" id="CHEBI:30616"/>
    </ligand>
</feature>
<feature type="binding site" evidence="1">
    <location>
        <position position="86"/>
    </location>
    <ligand>
        <name>L-citrulline</name>
        <dbReference type="ChEBI" id="CHEBI:57743"/>
    </ligand>
</feature>
<feature type="binding site" evidence="1">
    <location>
        <position position="116"/>
    </location>
    <ligand>
        <name>ATP</name>
        <dbReference type="ChEBI" id="CHEBI:30616"/>
    </ligand>
</feature>
<feature type="binding site" evidence="1">
    <location>
        <position position="118"/>
    </location>
    <ligand>
        <name>L-aspartate</name>
        <dbReference type="ChEBI" id="CHEBI:29991"/>
    </ligand>
</feature>
<feature type="binding site" evidence="1">
    <location>
        <position position="122"/>
    </location>
    <ligand>
        <name>L-aspartate</name>
        <dbReference type="ChEBI" id="CHEBI:29991"/>
    </ligand>
</feature>
<feature type="binding site" evidence="1">
    <location>
        <position position="122"/>
    </location>
    <ligand>
        <name>L-citrulline</name>
        <dbReference type="ChEBI" id="CHEBI:57743"/>
    </ligand>
</feature>
<feature type="binding site" evidence="1">
    <location>
        <position position="123"/>
    </location>
    <ligand>
        <name>L-aspartate</name>
        <dbReference type="ChEBI" id="CHEBI:29991"/>
    </ligand>
</feature>
<feature type="binding site" evidence="1">
    <location>
        <position position="126"/>
    </location>
    <ligand>
        <name>L-citrulline</name>
        <dbReference type="ChEBI" id="CHEBI:57743"/>
    </ligand>
</feature>
<feature type="binding site" evidence="1">
    <location>
        <position position="174"/>
    </location>
    <ligand>
        <name>L-citrulline</name>
        <dbReference type="ChEBI" id="CHEBI:57743"/>
    </ligand>
</feature>
<feature type="binding site" evidence="1">
    <location>
        <position position="183"/>
    </location>
    <ligand>
        <name>L-citrulline</name>
        <dbReference type="ChEBI" id="CHEBI:57743"/>
    </ligand>
</feature>
<feature type="binding site" evidence="1">
    <location>
        <position position="259"/>
    </location>
    <ligand>
        <name>L-citrulline</name>
        <dbReference type="ChEBI" id="CHEBI:57743"/>
    </ligand>
</feature>
<feature type="binding site" evidence="1">
    <location>
        <position position="271"/>
    </location>
    <ligand>
        <name>L-citrulline</name>
        <dbReference type="ChEBI" id="CHEBI:57743"/>
    </ligand>
</feature>
<accession>Q633G4</accession>
<keyword id="KW-0028">Amino-acid biosynthesis</keyword>
<keyword id="KW-0055">Arginine biosynthesis</keyword>
<keyword id="KW-0067">ATP-binding</keyword>
<keyword id="KW-0963">Cytoplasm</keyword>
<keyword id="KW-0436">Ligase</keyword>
<keyword id="KW-0547">Nucleotide-binding</keyword>
<reference key="1">
    <citation type="journal article" date="2006" name="J. Bacteriol.">
        <title>Pathogenomic sequence analysis of Bacillus cereus and Bacillus thuringiensis isolates closely related to Bacillus anthracis.</title>
        <authorList>
            <person name="Han C.S."/>
            <person name="Xie G."/>
            <person name="Challacombe J.F."/>
            <person name="Altherr M.R."/>
            <person name="Bhotika S.S."/>
            <person name="Bruce D."/>
            <person name="Campbell C.S."/>
            <person name="Campbell M.L."/>
            <person name="Chen J."/>
            <person name="Chertkov O."/>
            <person name="Cleland C."/>
            <person name="Dimitrijevic M."/>
            <person name="Doggett N.A."/>
            <person name="Fawcett J.J."/>
            <person name="Glavina T."/>
            <person name="Goodwin L.A."/>
            <person name="Hill K.K."/>
            <person name="Hitchcock P."/>
            <person name="Jackson P.J."/>
            <person name="Keim P."/>
            <person name="Kewalramani A.R."/>
            <person name="Longmire J."/>
            <person name="Lucas S."/>
            <person name="Malfatti S."/>
            <person name="McMurry K."/>
            <person name="Meincke L.J."/>
            <person name="Misra M."/>
            <person name="Moseman B.L."/>
            <person name="Mundt M."/>
            <person name="Munk A.C."/>
            <person name="Okinaka R.T."/>
            <person name="Parson-Quintana B."/>
            <person name="Reilly L.P."/>
            <person name="Richardson P."/>
            <person name="Robinson D.L."/>
            <person name="Rubin E."/>
            <person name="Saunders E."/>
            <person name="Tapia R."/>
            <person name="Tesmer J.G."/>
            <person name="Thayer N."/>
            <person name="Thompson L.S."/>
            <person name="Tice H."/>
            <person name="Ticknor L.O."/>
            <person name="Wills P.L."/>
            <person name="Brettin T.S."/>
            <person name="Gilna P."/>
        </authorList>
    </citation>
    <scope>NUCLEOTIDE SEQUENCE [LARGE SCALE GENOMIC DNA]</scope>
    <source>
        <strain>ZK / E33L</strain>
    </source>
</reference>